<organism>
    <name type="scientific">Coxiella burnetii (strain RSA 493 / Nine Mile phase I)</name>
    <dbReference type="NCBI Taxonomy" id="227377"/>
    <lineage>
        <taxon>Bacteria</taxon>
        <taxon>Pseudomonadati</taxon>
        <taxon>Pseudomonadota</taxon>
        <taxon>Gammaproteobacteria</taxon>
        <taxon>Legionellales</taxon>
        <taxon>Coxiellaceae</taxon>
        <taxon>Coxiella</taxon>
    </lineage>
</organism>
<dbReference type="EC" id="3.2.2.27" evidence="1"/>
<dbReference type="EMBL" id="AE016828">
    <property type="protein sequence ID" value="AAO90509.1"/>
    <property type="molecule type" value="Genomic_DNA"/>
</dbReference>
<dbReference type="RefSeq" id="NP_819995.1">
    <property type="nucleotide sequence ID" value="NC_002971.4"/>
</dbReference>
<dbReference type="RefSeq" id="WP_010957938.1">
    <property type="nucleotide sequence ID" value="NC_002971.4"/>
</dbReference>
<dbReference type="PDB" id="3TR7">
    <property type="method" value="X-ray"/>
    <property type="resolution" value="2.20 A"/>
    <property type="chains" value="A=1-229"/>
</dbReference>
<dbReference type="PDBsum" id="3TR7"/>
<dbReference type="SMR" id="Q83CW4"/>
<dbReference type="STRING" id="227377.CBU_0988"/>
<dbReference type="DNASU" id="1208883"/>
<dbReference type="EnsemblBacteria" id="AAO90509">
    <property type="protein sequence ID" value="AAO90509"/>
    <property type="gene ID" value="CBU_0988"/>
</dbReference>
<dbReference type="GeneID" id="1208883"/>
<dbReference type="KEGG" id="cbu:CBU_0988"/>
<dbReference type="PATRIC" id="fig|227377.7.peg.984"/>
<dbReference type="eggNOG" id="COG0692">
    <property type="taxonomic scope" value="Bacteria"/>
</dbReference>
<dbReference type="HOGENOM" id="CLU_032162_3_0_6"/>
<dbReference type="OrthoDB" id="9804372at2"/>
<dbReference type="EvolutionaryTrace" id="Q83CW4"/>
<dbReference type="Proteomes" id="UP000002671">
    <property type="component" value="Chromosome"/>
</dbReference>
<dbReference type="GO" id="GO:0005737">
    <property type="term" value="C:cytoplasm"/>
    <property type="evidence" value="ECO:0007669"/>
    <property type="project" value="UniProtKB-SubCell"/>
</dbReference>
<dbReference type="GO" id="GO:0004844">
    <property type="term" value="F:uracil DNA N-glycosylase activity"/>
    <property type="evidence" value="ECO:0007669"/>
    <property type="project" value="UniProtKB-UniRule"/>
</dbReference>
<dbReference type="GO" id="GO:0097510">
    <property type="term" value="P:base-excision repair, AP site formation via deaminated base removal"/>
    <property type="evidence" value="ECO:0000318"/>
    <property type="project" value="GO_Central"/>
</dbReference>
<dbReference type="CDD" id="cd10027">
    <property type="entry name" value="UDG-F1-like"/>
    <property type="match status" value="1"/>
</dbReference>
<dbReference type="FunFam" id="3.40.470.10:FF:000001">
    <property type="entry name" value="Uracil-DNA glycosylase"/>
    <property type="match status" value="1"/>
</dbReference>
<dbReference type="Gene3D" id="3.40.470.10">
    <property type="entry name" value="Uracil-DNA glycosylase-like domain"/>
    <property type="match status" value="1"/>
</dbReference>
<dbReference type="HAMAP" id="MF_00148">
    <property type="entry name" value="UDG"/>
    <property type="match status" value="1"/>
</dbReference>
<dbReference type="InterPro" id="IPR002043">
    <property type="entry name" value="UDG_fam1"/>
</dbReference>
<dbReference type="InterPro" id="IPR018085">
    <property type="entry name" value="Ura-DNA_Glyclase_AS"/>
</dbReference>
<dbReference type="InterPro" id="IPR005122">
    <property type="entry name" value="Uracil-DNA_glycosylase-like"/>
</dbReference>
<dbReference type="InterPro" id="IPR036895">
    <property type="entry name" value="Uracil-DNA_glycosylase-like_sf"/>
</dbReference>
<dbReference type="NCBIfam" id="NF003588">
    <property type="entry name" value="PRK05254.1-1"/>
    <property type="match status" value="1"/>
</dbReference>
<dbReference type="NCBIfam" id="NF003589">
    <property type="entry name" value="PRK05254.1-2"/>
    <property type="match status" value="1"/>
</dbReference>
<dbReference type="NCBIfam" id="NF003591">
    <property type="entry name" value="PRK05254.1-4"/>
    <property type="match status" value="1"/>
</dbReference>
<dbReference type="NCBIfam" id="NF003592">
    <property type="entry name" value="PRK05254.1-5"/>
    <property type="match status" value="1"/>
</dbReference>
<dbReference type="NCBIfam" id="TIGR00628">
    <property type="entry name" value="ung"/>
    <property type="match status" value="1"/>
</dbReference>
<dbReference type="PANTHER" id="PTHR11264">
    <property type="entry name" value="URACIL-DNA GLYCOSYLASE"/>
    <property type="match status" value="1"/>
</dbReference>
<dbReference type="PANTHER" id="PTHR11264:SF0">
    <property type="entry name" value="URACIL-DNA GLYCOSYLASE"/>
    <property type="match status" value="1"/>
</dbReference>
<dbReference type="Pfam" id="PF03167">
    <property type="entry name" value="UDG"/>
    <property type="match status" value="1"/>
</dbReference>
<dbReference type="SMART" id="SM00986">
    <property type="entry name" value="UDG"/>
    <property type="match status" value="1"/>
</dbReference>
<dbReference type="SMART" id="SM00987">
    <property type="entry name" value="UreE_C"/>
    <property type="match status" value="1"/>
</dbReference>
<dbReference type="SUPFAM" id="SSF52141">
    <property type="entry name" value="Uracil-DNA glycosylase-like"/>
    <property type="match status" value="1"/>
</dbReference>
<dbReference type="PROSITE" id="PS00130">
    <property type="entry name" value="U_DNA_GLYCOSYLASE"/>
    <property type="match status" value="1"/>
</dbReference>
<feature type="chain" id="PRO_0000176089" description="Uracil-DNA glycosylase">
    <location>
        <begin position="1"/>
        <end position="229"/>
    </location>
</feature>
<feature type="active site" description="Proton acceptor" evidence="1">
    <location>
        <position position="67"/>
    </location>
</feature>
<feature type="helix" evidence="2">
    <location>
        <begin position="10"/>
        <end position="13"/>
    </location>
</feature>
<feature type="helix" evidence="2">
    <location>
        <begin position="15"/>
        <end position="19"/>
    </location>
</feature>
<feature type="helix" evidence="2">
    <location>
        <begin position="21"/>
        <end position="35"/>
    </location>
</feature>
<feature type="strand" evidence="2">
    <location>
        <begin position="40"/>
        <end position="42"/>
    </location>
</feature>
<feature type="helix" evidence="2">
    <location>
        <begin position="44"/>
        <end position="46"/>
    </location>
</feature>
<feature type="helix" evidence="2">
    <location>
        <begin position="49"/>
        <end position="53"/>
    </location>
</feature>
<feature type="helix" evidence="2">
    <location>
        <begin position="56"/>
        <end position="58"/>
    </location>
</feature>
<feature type="strand" evidence="2">
    <location>
        <begin position="61"/>
        <end position="67"/>
    </location>
</feature>
<feature type="turn" evidence="2">
    <location>
        <begin position="72"/>
        <end position="74"/>
    </location>
</feature>
<feature type="strand" evidence="2">
    <location>
        <begin position="76"/>
        <end position="80"/>
    </location>
</feature>
<feature type="helix" evidence="2">
    <location>
        <begin position="90"/>
        <end position="103"/>
    </location>
</feature>
<feature type="helix" evidence="2">
    <location>
        <begin position="114"/>
        <end position="118"/>
    </location>
</feature>
<feature type="strand" evidence="2">
    <location>
        <begin position="121"/>
        <end position="128"/>
    </location>
</feature>
<feature type="turn" evidence="2">
    <location>
        <begin position="135"/>
        <end position="140"/>
    </location>
</feature>
<feature type="helix" evidence="2">
    <location>
        <begin position="143"/>
        <end position="153"/>
    </location>
</feature>
<feature type="helix" evidence="2">
    <location>
        <begin position="154"/>
        <end position="156"/>
    </location>
</feature>
<feature type="strand" evidence="2">
    <location>
        <begin position="162"/>
        <end position="167"/>
    </location>
</feature>
<feature type="helix" evidence="2">
    <location>
        <begin position="168"/>
        <end position="172"/>
    </location>
</feature>
<feature type="helix" evidence="2">
    <location>
        <begin position="173"/>
        <end position="176"/>
    </location>
</feature>
<feature type="strand" evidence="2">
    <location>
        <begin position="182"/>
        <end position="187"/>
    </location>
</feature>
<feature type="helix" evidence="2">
    <location>
        <begin position="204"/>
        <end position="214"/>
    </location>
</feature>
<gene>
    <name evidence="1" type="primary">ung</name>
    <name type="ordered locus">CBU_0988</name>
</gene>
<reference key="1">
    <citation type="journal article" date="2003" name="Proc. Natl. Acad. Sci. U.S.A.">
        <title>Complete genome sequence of the Q-fever pathogen, Coxiella burnetii.</title>
        <authorList>
            <person name="Seshadri R."/>
            <person name="Paulsen I.T."/>
            <person name="Eisen J.A."/>
            <person name="Read T.D."/>
            <person name="Nelson K.E."/>
            <person name="Nelson W.C."/>
            <person name="Ward N.L."/>
            <person name="Tettelin H."/>
            <person name="Davidsen T.M."/>
            <person name="Beanan M.J."/>
            <person name="DeBoy R.T."/>
            <person name="Daugherty S.C."/>
            <person name="Brinkac L.M."/>
            <person name="Madupu R."/>
            <person name="Dodson R.J."/>
            <person name="Khouri H.M."/>
            <person name="Lee K.H."/>
            <person name="Carty H.A."/>
            <person name="Scanlan D."/>
            <person name="Heinzen R.A."/>
            <person name="Thompson H.A."/>
            <person name="Samuel J.E."/>
            <person name="Fraser C.M."/>
            <person name="Heidelberg J.F."/>
        </authorList>
    </citation>
    <scope>NUCLEOTIDE SEQUENCE [LARGE SCALE GENOMIC DNA]</scope>
    <source>
        <strain>RSA 493 / Nine Mile phase I</strain>
    </source>
</reference>
<protein>
    <recommendedName>
        <fullName evidence="1">Uracil-DNA glycosylase</fullName>
        <shortName evidence="1">UDG</shortName>
        <ecNumber evidence="1">3.2.2.27</ecNumber>
    </recommendedName>
</protein>
<proteinExistence type="evidence at protein level"/>
<comment type="function">
    <text evidence="1">Excises uracil residues from the DNA which can arise as a result of misincorporation of dUMP residues by DNA polymerase or due to deamination of cytosine.</text>
</comment>
<comment type="catalytic activity">
    <reaction evidence="1">
        <text>Hydrolyzes single-stranded DNA or mismatched double-stranded DNA and polynucleotides, releasing free uracil.</text>
        <dbReference type="EC" id="3.2.2.27"/>
    </reaction>
</comment>
<comment type="subcellular location">
    <subcellularLocation>
        <location evidence="1">Cytoplasm</location>
    </subcellularLocation>
</comment>
<comment type="similarity">
    <text evidence="1">Belongs to the uracil-DNA glycosylase (UDG) superfamily. UNG family.</text>
</comment>
<evidence type="ECO:0000255" key="1">
    <source>
        <dbReference type="HAMAP-Rule" id="MF_00148"/>
    </source>
</evidence>
<evidence type="ECO:0007829" key="2">
    <source>
        <dbReference type="PDB" id="3TR7"/>
    </source>
</evidence>
<name>UNG_COXBU</name>
<sequence length="229" mass="25667">MTTMAETQTWQTVLGEEKQEPYFQEILDFVKKERKAGKIIYPPQKDIFNALKLTPYEAIKVVILGQDPYHGPNQAHGLAFSVRPGVPAPPSLQNIFKELHADLGVSIPSHGFLEKWAKQGVLLLNAALTVEAGKPQSHANIGWHRFTDKVIESLNDHPEGIVFLLWGSYAQKKSQLITNLRHRILKAPHPSPLSAARGFLGCRHFSKANQLLHEMGRGEIDWALDEKVS</sequence>
<keyword id="KW-0002">3D-structure</keyword>
<keyword id="KW-0963">Cytoplasm</keyword>
<keyword id="KW-0227">DNA damage</keyword>
<keyword id="KW-0234">DNA repair</keyword>
<keyword id="KW-0378">Hydrolase</keyword>
<keyword id="KW-1185">Reference proteome</keyword>
<accession>Q83CW4</accession>